<feature type="chain" id="PRO_1000056027" description="Large ribosomal subunit protein uL30">
    <location>
        <begin position="1"/>
        <end position="60"/>
    </location>
</feature>
<protein>
    <recommendedName>
        <fullName evidence="1">Large ribosomal subunit protein uL30</fullName>
    </recommendedName>
    <alternativeName>
        <fullName evidence="2">50S ribosomal protein L30</fullName>
    </alternativeName>
</protein>
<evidence type="ECO:0000255" key="1">
    <source>
        <dbReference type="HAMAP-Rule" id="MF_01371"/>
    </source>
</evidence>
<evidence type="ECO:0000305" key="2"/>
<proteinExistence type="inferred from homology"/>
<sequence length="60" mass="6846">MAQLRVTQIKSKISEKQNQRDTLRSLGLRRIGAVVVREDNAQNRGYVNTVAHLVKVEEID</sequence>
<dbReference type="EMBL" id="AM711867">
    <property type="protein sequence ID" value="CAN02683.1"/>
    <property type="molecule type" value="Genomic_DNA"/>
</dbReference>
<dbReference type="SMR" id="A5CU96"/>
<dbReference type="KEGG" id="cmi:CMM_2600"/>
<dbReference type="eggNOG" id="COG1841">
    <property type="taxonomic scope" value="Bacteria"/>
</dbReference>
<dbReference type="HOGENOM" id="CLU_131047_2_0_11"/>
<dbReference type="Proteomes" id="UP000001564">
    <property type="component" value="Chromosome"/>
</dbReference>
<dbReference type="GO" id="GO:0022625">
    <property type="term" value="C:cytosolic large ribosomal subunit"/>
    <property type="evidence" value="ECO:0007669"/>
    <property type="project" value="TreeGrafter"/>
</dbReference>
<dbReference type="GO" id="GO:0003735">
    <property type="term" value="F:structural constituent of ribosome"/>
    <property type="evidence" value="ECO:0007669"/>
    <property type="project" value="InterPro"/>
</dbReference>
<dbReference type="GO" id="GO:0006412">
    <property type="term" value="P:translation"/>
    <property type="evidence" value="ECO:0007669"/>
    <property type="project" value="UniProtKB-UniRule"/>
</dbReference>
<dbReference type="CDD" id="cd01658">
    <property type="entry name" value="Ribosomal_L30"/>
    <property type="match status" value="1"/>
</dbReference>
<dbReference type="FunFam" id="3.30.1390.20:FF:000001">
    <property type="entry name" value="50S ribosomal protein L30"/>
    <property type="match status" value="1"/>
</dbReference>
<dbReference type="Gene3D" id="3.30.1390.20">
    <property type="entry name" value="Ribosomal protein L30, ferredoxin-like fold domain"/>
    <property type="match status" value="1"/>
</dbReference>
<dbReference type="HAMAP" id="MF_01371_B">
    <property type="entry name" value="Ribosomal_uL30_B"/>
    <property type="match status" value="1"/>
</dbReference>
<dbReference type="InterPro" id="IPR036919">
    <property type="entry name" value="Ribo_uL30_ferredoxin-like_sf"/>
</dbReference>
<dbReference type="InterPro" id="IPR005996">
    <property type="entry name" value="Ribosomal_uL30_bac-type"/>
</dbReference>
<dbReference type="InterPro" id="IPR016082">
    <property type="entry name" value="Ribosomal_uL30_ferredoxin-like"/>
</dbReference>
<dbReference type="NCBIfam" id="TIGR01308">
    <property type="entry name" value="rpmD_bact"/>
    <property type="match status" value="1"/>
</dbReference>
<dbReference type="PANTHER" id="PTHR15892:SF2">
    <property type="entry name" value="LARGE RIBOSOMAL SUBUNIT PROTEIN UL30M"/>
    <property type="match status" value="1"/>
</dbReference>
<dbReference type="PANTHER" id="PTHR15892">
    <property type="entry name" value="MITOCHONDRIAL RIBOSOMAL PROTEIN L30"/>
    <property type="match status" value="1"/>
</dbReference>
<dbReference type="Pfam" id="PF00327">
    <property type="entry name" value="Ribosomal_L30"/>
    <property type="match status" value="1"/>
</dbReference>
<dbReference type="PIRSF" id="PIRSF002211">
    <property type="entry name" value="Ribosomal_L30_bac-type"/>
    <property type="match status" value="1"/>
</dbReference>
<dbReference type="SUPFAM" id="SSF55129">
    <property type="entry name" value="Ribosomal protein L30p/L7e"/>
    <property type="match status" value="1"/>
</dbReference>
<gene>
    <name evidence="1" type="primary">rpmD</name>
    <name type="ordered locus">CMM_2600</name>
</gene>
<reference key="1">
    <citation type="journal article" date="2008" name="J. Bacteriol.">
        <title>The genome sequence of the tomato-pathogenic actinomycete Clavibacter michiganensis subsp. michiganensis NCPPB382 reveals a large island involved in pathogenicity.</title>
        <authorList>
            <person name="Gartemann K.-H."/>
            <person name="Abt B."/>
            <person name="Bekel T."/>
            <person name="Burger A."/>
            <person name="Engemann J."/>
            <person name="Fluegel M."/>
            <person name="Gaigalat L."/>
            <person name="Goesmann A."/>
            <person name="Graefen I."/>
            <person name="Kalinowski J."/>
            <person name="Kaup O."/>
            <person name="Kirchner O."/>
            <person name="Krause L."/>
            <person name="Linke B."/>
            <person name="McHardy A."/>
            <person name="Meyer F."/>
            <person name="Pohle S."/>
            <person name="Rueckert C."/>
            <person name="Schneiker S."/>
            <person name="Zellermann E.-M."/>
            <person name="Puehler A."/>
            <person name="Eichenlaub R."/>
            <person name="Kaiser O."/>
            <person name="Bartels D."/>
        </authorList>
    </citation>
    <scope>NUCLEOTIDE SEQUENCE [LARGE SCALE GENOMIC DNA]</scope>
    <source>
        <strain>NCPPB 382</strain>
    </source>
</reference>
<organism>
    <name type="scientific">Clavibacter michiganensis subsp. michiganensis (strain NCPPB 382)</name>
    <dbReference type="NCBI Taxonomy" id="443906"/>
    <lineage>
        <taxon>Bacteria</taxon>
        <taxon>Bacillati</taxon>
        <taxon>Actinomycetota</taxon>
        <taxon>Actinomycetes</taxon>
        <taxon>Micrococcales</taxon>
        <taxon>Microbacteriaceae</taxon>
        <taxon>Clavibacter</taxon>
    </lineage>
</organism>
<keyword id="KW-0687">Ribonucleoprotein</keyword>
<keyword id="KW-0689">Ribosomal protein</keyword>
<comment type="subunit">
    <text evidence="1">Part of the 50S ribosomal subunit.</text>
</comment>
<comment type="similarity">
    <text evidence="1">Belongs to the universal ribosomal protein uL30 family.</text>
</comment>
<name>RL30_CLAM3</name>
<accession>A5CU96</accession>